<keyword id="KW-0067">ATP-binding</keyword>
<keyword id="KW-0378">Hydrolase</keyword>
<keyword id="KW-0460">Magnesium</keyword>
<keyword id="KW-0479">Metal-binding</keyword>
<keyword id="KW-0511">Multifunctional enzyme</keyword>
<keyword id="KW-0533">Nickel</keyword>
<keyword id="KW-0547">Nucleotide-binding</keyword>
<keyword id="KW-0548">Nucleotidyltransferase</keyword>
<keyword id="KW-0692">RNA repair</keyword>
<keyword id="KW-0694">RNA-binding</keyword>
<keyword id="KW-0808">Transferase</keyword>
<keyword id="KW-0819">tRNA processing</keyword>
<accession>A6T2Y3</accession>
<organism>
    <name type="scientific">Janthinobacterium sp. (strain Marseille)</name>
    <name type="common">Minibacterium massiliensis</name>
    <dbReference type="NCBI Taxonomy" id="375286"/>
    <lineage>
        <taxon>Bacteria</taxon>
        <taxon>Pseudomonadati</taxon>
        <taxon>Pseudomonadota</taxon>
        <taxon>Betaproteobacteria</taxon>
        <taxon>Burkholderiales</taxon>
        <taxon>Oxalobacteraceae</taxon>
        <taxon>Janthinobacterium</taxon>
    </lineage>
</organism>
<gene>
    <name evidence="1" type="primary">cca</name>
    <name type="ordered locus">mma_3190</name>
</gene>
<reference key="1">
    <citation type="journal article" date="2007" name="PLoS Genet.">
        <title>Genome analysis of Minibacterium massiliensis highlights the convergent evolution of water-living bacteria.</title>
        <authorList>
            <person name="Audic S."/>
            <person name="Robert C."/>
            <person name="Campagna B."/>
            <person name="Parinello H."/>
            <person name="Claverie J.-M."/>
            <person name="Raoult D."/>
            <person name="Drancourt M."/>
        </authorList>
    </citation>
    <scope>NUCLEOTIDE SEQUENCE [LARGE SCALE GENOMIC DNA]</scope>
    <source>
        <strain>Marseille</strain>
    </source>
</reference>
<proteinExistence type="inferred from homology"/>
<dbReference type="EC" id="2.7.7.72" evidence="1"/>
<dbReference type="EC" id="3.1.3.-" evidence="1"/>
<dbReference type="EC" id="3.1.4.-" evidence="1"/>
<dbReference type="EMBL" id="CP000269">
    <property type="protein sequence ID" value="ABR88984.1"/>
    <property type="molecule type" value="Genomic_DNA"/>
</dbReference>
<dbReference type="RefSeq" id="WP_012081033.1">
    <property type="nucleotide sequence ID" value="NC_009659.1"/>
</dbReference>
<dbReference type="SMR" id="A6T2Y3"/>
<dbReference type="STRING" id="375286.mma_3190"/>
<dbReference type="KEGG" id="mms:mma_3190"/>
<dbReference type="eggNOG" id="COG0617">
    <property type="taxonomic scope" value="Bacteria"/>
</dbReference>
<dbReference type="HOGENOM" id="CLU_015961_1_1_4"/>
<dbReference type="OrthoDB" id="9805698at2"/>
<dbReference type="Proteomes" id="UP000006388">
    <property type="component" value="Chromosome"/>
</dbReference>
<dbReference type="GO" id="GO:0005524">
    <property type="term" value="F:ATP binding"/>
    <property type="evidence" value="ECO:0007669"/>
    <property type="project" value="UniProtKB-UniRule"/>
</dbReference>
<dbReference type="GO" id="GO:0004810">
    <property type="term" value="F:CCA tRNA nucleotidyltransferase activity"/>
    <property type="evidence" value="ECO:0007669"/>
    <property type="project" value="UniProtKB-UniRule"/>
</dbReference>
<dbReference type="GO" id="GO:0004112">
    <property type="term" value="F:cyclic-nucleotide phosphodiesterase activity"/>
    <property type="evidence" value="ECO:0007669"/>
    <property type="project" value="UniProtKB-UniRule"/>
</dbReference>
<dbReference type="GO" id="GO:0000287">
    <property type="term" value="F:magnesium ion binding"/>
    <property type="evidence" value="ECO:0007669"/>
    <property type="project" value="UniProtKB-UniRule"/>
</dbReference>
<dbReference type="GO" id="GO:0016791">
    <property type="term" value="F:phosphatase activity"/>
    <property type="evidence" value="ECO:0007669"/>
    <property type="project" value="UniProtKB-UniRule"/>
</dbReference>
<dbReference type="GO" id="GO:0000049">
    <property type="term" value="F:tRNA binding"/>
    <property type="evidence" value="ECO:0007669"/>
    <property type="project" value="UniProtKB-UniRule"/>
</dbReference>
<dbReference type="GO" id="GO:0042245">
    <property type="term" value="P:RNA repair"/>
    <property type="evidence" value="ECO:0007669"/>
    <property type="project" value="UniProtKB-KW"/>
</dbReference>
<dbReference type="GO" id="GO:0001680">
    <property type="term" value="P:tRNA 3'-terminal CCA addition"/>
    <property type="evidence" value="ECO:0007669"/>
    <property type="project" value="UniProtKB-UniRule"/>
</dbReference>
<dbReference type="CDD" id="cd00077">
    <property type="entry name" value="HDc"/>
    <property type="match status" value="1"/>
</dbReference>
<dbReference type="CDD" id="cd05398">
    <property type="entry name" value="NT_ClassII-CCAase"/>
    <property type="match status" value="1"/>
</dbReference>
<dbReference type="Gene3D" id="3.30.460.10">
    <property type="entry name" value="Beta Polymerase, domain 2"/>
    <property type="match status" value="1"/>
</dbReference>
<dbReference type="Gene3D" id="1.10.3090.10">
    <property type="entry name" value="cca-adding enzyme, domain 2"/>
    <property type="match status" value="1"/>
</dbReference>
<dbReference type="HAMAP" id="MF_01261">
    <property type="entry name" value="CCA_bact_type1"/>
    <property type="match status" value="1"/>
</dbReference>
<dbReference type="HAMAP" id="MF_01262">
    <property type="entry name" value="CCA_bact_type2"/>
    <property type="match status" value="1"/>
</dbReference>
<dbReference type="InterPro" id="IPR012006">
    <property type="entry name" value="CCA_bact"/>
</dbReference>
<dbReference type="InterPro" id="IPR003607">
    <property type="entry name" value="HD/PDEase_dom"/>
</dbReference>
<dbReference type="InterPro" id="IPR006674">
    <property type="entry name" value="HD_domain"/>
</dbReference>
<dbReference type="InterPro" id="IPR043519">
    <property type="entry name" value="NT_sf"/>
</dbReference>
<dbReference type="InterPro" id="IPR002646">
    <property type="entry name" value="PolA_pol_head_dom"/>
</dbReference>
<dbReference type="InterPro" id="IPR032828">
    <property type="entry name" value="PolyA_RNA-bd"/>
</dbReference>
<dbReference type="InterPro" id="IPR050124">
    <property type="entry name" value="tRNA_CCA-adding_enzyme"/>
</dbReference>
<dbReference type="NCBIfam" id="NF008137">
    <property type="entry name" value="PRK10885.1"/>
    <property type="match status" value="1"/>
</dbReference>
<dbReference type="PANTHER" id="PTHR47545">
    <property type="entry name" value="MULTIFUNCTIONAL CCA PROTEIN"/>
    <property type="match status" value="1"/>
</dbReference>
<dbReference type="PANTHER" id="PTHR47545:SF1">
    <property type="entry name" value="MULTIFUNCTIONAL CCA PROTEIN"/>
    <property type="match status" value="1"/>
</dbReference>
<dbReference type="Pfam" id="PF01966">
    <property type="entry name" value="HD"/>
    <property type="match status" value="1"/>
</dbReference>
<dbReference type="Pfam" id="PF01743">
    <property type="entry name" value="PolyA_pol"/>
    <property type="match status" value="1"/>
</dbReference>
<dbReference type="Pfam" id="PF12627">
    <property type="entry name" value="PolyA_pol_RNAbd"/>
    <property type="match status" value="1"/>
</dbReference>
<dbReference type="PIRSF" id="PIRSF000813">
    <property type="entry name" value="CCA_bact"/>
    <property type="match status" value="1"/>
</dbReference>
<dbReference type="SUPFAM" id="SSF81301">
    <property type="entry name" value="Nucleotidyltransferase"/>
    <property type="match status" value="1"/>
</dbReference>
<dbReference type="SUPFAM" id="SSF81891">
    <property type="entry name" value="Poly A polymerase C-terminal region-like"/>
    <property type="match status" value="1"/>
</dbReference>
<dbReference type="PROSITE" id="PS51831">
    <property type="entry name" value="HD"/>
    <property type="match status" value="1"/>
</dbReference>
<evidence type="ECO:0000255" key="1">
    <source>
        <dbReference type="HAMAP-Rule" id="MF_01261"/>
    </source>
</evidence>
<name>CCA_JANMA</name>
<feature type="chain" id="PRO_1000054271" description="Multifunctional CCA protein">
    <location>
        <begin position="1"/>
        <end position="416"/>
    </location>
</feature>
<feature type="domain" description="HD" evidence="1">
    <location>
        <begin position="226"/>
        <end position="327"/>
    </location>
</feature>
<feature type="binding site" evidence="1">
    <location>
        <position position="8"/>
    </location>
    <ligand>
        <name>ATP</name>
        <dbReference type="ChEBI" id="CHEBI:30616"/>
    </ligand>
</feature>
<feature type="binding site" evidence="1">
    <location>
        <position position="8"/>
    </location>
    <ligand>
        <name>CTP</name>
        <dbReference type="ChEBI" id="CHEBI:37563"/>
    </ligand>
</feature>
<feature type="binding site" evidence="1">
    <location>
        <position position="11"/>
    </location>
    <ligand>
        <name>ATP</name>
        <dbReference type="ChEBI" id="CHEBI:30616"/>
    </ligand>
</feature>
<feature type="binding site" evidence="1">
    <location>
        <position position="11"/>
    </location>
    <ligand>
        <name>CTP</name>
        <dbReference type="ChEBI" id="CHEBI:37563"/>
    </ligand>
</feature>
<feature type="binding site" evidence="1">
    <location>
        <position position="21"/>
    </location>
    <ligand>
        <name>Mg(2+)</name>
        <dbReference type="ChEBI" id="CHEBI:18420"/>
    </ligand>
</feature>
<feature type="binding site" evidence="1">
    <location>
        <position position="23"/>
    </location>
    <ligand>
        <name>Mg(2+)</name>
        <dbReference type="ChEBI" id="CHEBI:18420"/>
    </ligand>
</feature>
<feature type="binding site" evidence="1">
    <location>
        <position position="91"/>
    </location>
    <ligand>
        <name>ATP</name>
        <dbReference type="ChEBI" id="CHEBI:30616"/>
    </ligand>
</feature>
<feature type="binding site" evidence="1">
    <location>
        <position position="91"/>
    </location>
    <ligand>
        <name>CTP</name>
        <dbReference type="ChEBI" id="CHEBI:37563"/>
    </ligand>
</feature>
<feature type="binding site" evidence="1">
    <location>
        <position position="137"/>
    </location>
    <ligand>
        <name>ATP</name>
        <dbReference type="ChEBI" id="CHEBI:30616"/>
    </ligand>
</feature>
<feature type="binding site" evidence="1">
    <location>
        <position position="137"/>
    </location>
    <ligand>
        <name>CTP</name>
        <dbReference type="ChEBI" id="CHEBI:37563"/>
    </ligand>
</feature>
<feature type="binding site" evidence="1">
    <location>
        <position position="140"/>
    </location>
    <ligand>
        <name>ATP</name>
        <dbReference type="ChEBI" id="CHEBI:30616"/>
    </ligand>
</feature>
<feature type="binding site" evidence="1">
    <location>
        <position position="140"/>
    </location>
    <ligand>
        <name>CTP</name>
        <dbReference type="ChEBI" id="CHEBI:37563"/>
    </ligand>
</feature>
<protein>
    <recommendedName>
        <fullName evidence="1">Multifunctional CCA protein</fullName>
    </recommendedName>
    <domain>
        <recommendedName>
            <fullName evidence="1">CCA-adding enzyme</fullName>
            <ecNumber evidence="1">2.7.7.72</ecNumber>
        </recommendedName>
        <alternativeName>
            <fullName evidence="1">CCA tRNA nucleotidyltransferase</fullName>
        </alternativeName>
        <alternativeName>
            <fullName evidence="1">tRNA CCA-pyrophosphorylase</fullName>
        </alternativeName>
        <alternativeName>
            <fullName evidence="1">tRNA adenylyl-/cytidylyl-transferase</fullName>
        </alternativeName>
        <alternativeName>
            <fullName evidence="1">tRNA nucleotidyltransferase</fullName>
        </alternativeName>
        <alternativeName>
            <fullName evidence="1">tRNA-NT</fullName>
        </alternativeName>
    </domain>
    <domain>
        <recommendedName>
            <fullName evidence="1">2'-nucleotidase</fullName>
            <ecNumber evidence="1">3.1.3.-</ecNumber>
        </recommendedName>
    </domain>
    <domain>
        <recommendedName>
            <fullName evidence="1">2',3'-cyclic phosphodiesterase</fullName>
            <ecNumber evidence="1">3.1.4.-</ecNumber>
        </recommendedName>
    </domain>
    <domain>
        <recommendedName>
            <fullName evidence="1">Phosphatase</fullName>
            <ecNumber evidence="1">3.1.3.-</ecNumber>
        </recommendedName>
    </domain>
</protein>
<sequence>MKTYIVGGAVRDELLGVAVKDRDYVVVGATPEAMVAQGYTPVGKDFPVFLHPKTHAEYALARTERKTAPGYKGFVFHTDASVTLEEDLIRRDLTINAMAQDEDGSIVDPFGGKRDLELRIFRHVSPAFAEDPVRILRIARFAARFPEFTVAAETNTLMQDMVTAGEVDALVPERVWQELARGLMEVRPSRMFEVLRDCGALQRILPELDVLWGVPQPAQYHPEIDTGVHIMLVIDYAAGIKADLPVRCAALLHDLGKGVTLPDQWPRHHGHEMHSVKLVDTVSKRLKIPNDCRDLALMTAREHGNVGRALELRANTIVNLLERCDAFRKPQRFIEMLQASECDHRGRTGFADKPFPQKAYLQAALAAAQTVNGGEIAELTRQRYPDQAQRIPEAIHEARVQAVAAALKKQPGDPKE</sequence>
<comment type="function">
    <text evidence="1">Catalyzes the addition and repair of the essential 3'-terminal CCA sequence in tRNAs without using a nucleic acid template. Adds these three nucleotides in the order of C, C, and A to the tRNA nucleotide-73, using CTP and ATP as substrates and producing inorganic pyrophosphate. tRNA 3'-terminal CCA addition is required both for tRNA processing and repair. Also involved in tRNA surveillance by mediating tandem CCA addition to generate a CCACCA at the 3' terminus of unstable tRNAs. While stable tRNAs receive only 3'-terminal CCA, unstable tRNAs are marked with CCACCA and rapidly degraded.</text>
</comment>
<comment type="catalytic activity">
    <reaction evidence="1">
        <text>a tRNA precursor + 2 CTP + ATP = a tRNA with a 3' CCA end + 3 diphosphate</text>
        <dbReference type="Rhea" id="RHEA:14433"/>
        <dbReference type="Rhea" id="RHEA-COMP:10465"/>
        <dbReference type="Rhea" id="RHEA-COMP:10468"/>
        <dbReference type="ChEBI" id="CHEBI:30616"/>
        <dbReference type="ChEBI" id="CHEBI:33019"/>
        <dbReference type="ChEBI" id="CHEBI:37563"/>
        <dbReference type="ChEBI" id="CHEBI:74896"/>
        <dbReference type="ChEBI" id="CHEBI:83071"/>
        <dbReference type="EC" id="2.7.7.72"/>
    </reaction>
</comment>
<comment type="catalytic activity">
    <reaction evidence="1">
        <text>a tRNA with a 3' CCA end + 2 CTP + ATP = a tRNA with a 3' CCACCA end + 3 diphosphate</text>
        <dbReference type="Rhea" id="RHEA:76235"/>
        <dbReference type="Rhea" id="RHEA-COMP:10468"/>
        <dbReference type="Rhea" id="RHEA-COMP:18655"/>
        <dbReference type="ChEBI" id="CHEBI:30616"/>
        <dbReference type="ChEBI" id="CHEBI:33019"/>
        <dbReference type="ChEBI" id="CHEBI:37563"/>
        <dbReference type="ChEBI" id="CHEBI:83071"/>
        <dbReference type="ChEBI" id="CHEBI:195187"/>
    </reaction>
    <physiologicalReaction direction="left-to-right" evidence="1">
        <dbReference type="Rhea" id="RHEA:76236"/>
    </physiologicalReaction>
</comment>
<comment type="cofactor">
    <cofactor evidence="1">
        <name>Mg(2+)</name>
        <dbReference type="ChEBI" id="CHEBI:18420"/>
    </cofactor>
    <text evidence="1">Magnesium is required for nucleotidyltransferase activity.</text>
</comment>
<comment type="cofactor">
    <cofactor evidence="1">
        <name>Ni(2+)</name>
        <dbReference type="ChEBI" id="CHEBI:49786"/>
    </cofactor>
    <text evidence="1">Nickel for phosphatase activity.</text>
</comment>
<comment type="subunit">
    <text evidence="1">Monomer. Can also form homodimers and oligomers.</text>
</comment>
<comment type="domain">
    <text evidence="1">Comprises two domains: an N-terminal domain containing the nucleotidyltransferase activity and a C-terminal HD domain associated with both phosphodiesterase and phosphatase activities.</text>
</comment>
<comment type="miscellaneous">
    <text evidence="1">A single active site specifically recognizes both ATP and CTP and is responsible for their addition.</text>
</comment>
<comment type="similarity">
    <text evidence="1">Belongs to the tRNA nucleotidyltransferase/poly(A) polymerase family. Bacterial CCA-adding enzyme type 1 subfamily.</text>
</comment>